<organism>
    <name type="scientific">Escherichia coli O81 (strain ED1a)</name>
    <dbReference type="NCBI Taxonomy" id="585397"/>
    <lineage>
        <taxon>Bacteria</taxon>
        <taxon>Pseudomonadati</taxon>
        <taxon>Pseudomonadota</taxon>
        <taxon>Gammaproteobacteria</taxon>
        <taxon>Enterobacterales</taxon>
        <taxon>Enterobacteriaceae</taxon>
        <taxon>Escherichia</taxon>
    </lineage>
</organism>
<protein>
    <recommendedName>
        <fullName evidence="1">Replication restart protein PriB</fullName>
    </recommendedName>
</protein>
<dbReference type="EMBL" id="CU928162">
    <property type="protein sequence ID" value="CAR11151.2"/>
    <property type="molecule type" value="Genomic_DNA"/>
</dbReference>
<dbReference type="RefSeq" id="WP_001296681.1">
    <property type="nucleotide sequence ID" value="NC_011745.1"/>
</dbReference>
<dbReference type="SMR" id="B7MT75"/>
<dbReference type="GeneID" id="93777622"/>
<dbReference type="KEGG" id="ecq:ECED1_5051"/>
<dbReference type="HOGENOM" id="CLU_166075_0_0_6"/>
<dbReference type="Proteomes" id="UP000000748">
    <property type="component" value="Chromosome"/>
</dbReference>
<dbReference type="GO" id="GO:1990077">
    <property type="term" value="C:primosome complex"/>
    <property type="evidence" value="ECO:0007669"/>
    <property type="project" value="UniProtKB-KW"/>
</dbReference>
<dbReference type="GO" id="GO:0003697">
    <property type="term" value="F:single-stranded DNA binding"/>
    <property type="evidence" value="ECO:0007669"/>
    <property type="project" value="UniProtKB-UniRule"/>
</dbReference>
<dbReference type="GO" id="GO:0006269">
    <property type="term" value="P:DNA replication, synthesis of primer"/>
    <property type="evidence" value="ECO:0007669"/>
    <property type="project" value="UniProtKB-KW"/>
</dbReference>
<dbReference type="CDD" id="cd04496">
    <property type="entry name" value="SSB_OBF"/>
    <property type="match status" value="1"/>
</dbReference>
<dbReference type="FunFam" id="2.40.50.140:FF:000077">
    <property type="entry name" value="Primosomal replication protein N"/>
    <property type="match status" value="1"/>
</dbReference>
<dbReference type="Gene3D" id="2.40.50.140">
    <property type="entry name" value="Nucleic acid-binding proteins"/>
    <property type="match status" value="1"/>
</dbReference>
<dbReference type="HAMAP" id="MF_00720">
    <property type="entry name" value="PriB"/>
    <property type="match status" value="1"/>
</dbReference>
<dbReference type="InterPro" id="IPR012340">
    <property type="entry name" value="NA-bd_OB-fold"/>
</dbReference>
<dbReference type="InterPro" id="IPR000424">
    <property type="entry name" value="Primosome_PriB/ssb"/>
</dbReference>
<dbReference type="InterPro" id="IPR023646">
    <property type="entry name" value="Prisomal_replication_PriB"/>
</dbReference>
<dbReference type="NCBIfam" id="TIGR04418">
    <property type="entry name" value="PriB_gamma"/>
    <property type="match status" value="1"/>
</dbReference>
<dbReference type="Pfam" id="PF22657">
    <property type="entry name" value="SSB_1"/>
    <property type="match status" value="1"/>
</dbReference>
<dbReference type="PIRSF" id="PIRSF003135">
    <property type="entry name" value="Primosomal_n"/>
    <property type="match status" value="1"/>
</dbReference>
<dbReference type="SUPFAM" id="SSF50249">
    <property type="entry name" value="Nucleic acid-binding proteins"/>
    <property type="match status" value="1"/>
</dbReference>
<dbReference type="PROSITE" id="PS50935">
    <property type="entry name" value="SSB"/>
    <property type="match status" value="1"/>
</dbReference>
<evidence type="ECO:0000255" key="1">
    <source>
        <dbReference type="HAMAP-Rule" id="MF_00720"/>
    </source>
</evidence>
<accession>B7MT75</accession>
<proteinExistence type="inferred from homology"/>
<keyword id="KW-0235">DNA replication</keyword>
<keyword id="KW-0238">DNA-binding</keyword>
<keyword id="KW-0639">Primosome</keyword>
<name>PRIB_ECO81</name>
<reference key="1">
    <citation type="journal article" date="2009" name="PLoS Genet.">
        <title>Organised genome dynamics in the Escherichia coli species results in highly diverse adaptive paths.</title>
        <authorList>
            <person name="Touchon M."/>
            <person name="Hoede C."/>
            <person name="Tenaillon O."/>
            <person name="Barbe V."/>
            <person name="Baeriswyl S."/>
            <person name="Bidet P."/>
            <person name="Bingen E."/>
            <person name="Bonacorsi S."/>
            <person name="Bouchier C."/>
            <person name="Bouvet O."/>
            <person name="Calteau A."/>
            <person name="Chiapello H."/>
            <person name="Clermont O."/>
            <person name="Cruveiller S."/>
            <person name="Danchin A."/>
            <person name="Diard M."/>
            <person name="Dossat C."/>
            <person name="Karoui M.E."/>
            <person name="Frapy E."/>
            <person name="Garry L."/>
            <person name="Ghigo J.M."/>
            <person name="Gilles A.M."/>
            <person name="Johnson J."/>
            <person name="Le Bouguenec C."/>
            <person name="Lescat M."/>
            <person name="Mangenot S."/>
            <person name="Martinez-Jehanne V."/>
            <person name="Matic I."/>
            <person name="Nassif X."/>
            <person name="Oztas S."/>
            <person name="Petit M.A."/>
            <person name="Pichon C."/>
            <person name="Rouy Z."/>
            <person name="Ruf C.S."/>
            <person name="Schneider D."/>
            <person name="Tourret J."/>
            <person name="Vacherie B."/>
            <person name="Vallenet D."/>
            <person name="Medigue C."/>
            <person name="Rocha E.P.C."/>
            <person name="Denamur E."/>
        </authorList>
    </citation>
    <scope>NUCLEOTIDE SEQUENCE [LARGE SCALE GENOMIC DNA]</scope>
    <source>
        <strain>ED1a</strain>
    </source>
</reference>
<sequence length="104" mass="11472">MTNRLVLSGTVCRTPLRKVSPSGIPHCQFVLEHRSVQEEAGFHRQAWCQMPVIVSGHENQAITHSITVGSRITVQGFISCHKAKNGLSKMVLHAEQIELIDSGD</sequence>
<gene>
    <name evidence="1" type="primary">priB</name>
    <name type="ordered locus">ECED1_5051</name>
</gene>
<comment type="function">
    <text evidence="1">Involved in the restart of stalled replication forks, which reloads the replicative helicase on sites other than the origin of replication; the PriA-PriB pathway is the major replication restart pathway. During primosome assembly it facilitates complex formation between PriA and DnaT on DNA; stabilizes PriA on DNA. Stimulates the DNA unwinding activity of PriA helicase.</text>
</comment>
<comment type="subunit">
    <text evidence="1">Homodimer. Interacts with PriA and DnaT. Component of the replication restart primosome. Primosome assembly occurs via a 'hand-off' mechanism. PriA binds to replication forks, subsequently PriB then DnaT bind; DnaT then displaces ssDNA to generate the helicase loading substrate.</text>
</comment>
<comment type="similarity">
    <text evidence="1">Belongs to the PriB family.</text>
</comment>
<feature type="chain" id="PRO_1000192547" description="Replication restart protein PriB">
    <location>
        <begin position="1"/>
        <end position="104"/>
    </location>
</feature>
<feature type="domain" description="SSB" evidence="1">
    <location>
        <begin position="1"/>
        <end position="101"/>
    </location>
</feature>